<organism>
    <name type="scientific">Streptococcus pyogenes serotype M12 (strain MGAS9429)</name>
    <dbReference type="NCBI Taxonomy" id="370551"/>
    <lineage>
        <taxon>Bacteria</taxon>
        <taxon>Bacillati</taxon>
        <taxon>Bacillota</taxon>
        <taxon>Bacilli</taxon>
        <taxon>Lactobacillales</taxon>
        <taxon>Streptococcaceae</taxon>
        <taxon>Streptococcus</taxon>
    </lineage>
</organism>
<name>RPOC_STRPC</name>
<evidence type="ECO:0000255" key="1">
    <source>
        <dbReference type="HAMAP-Rule" id="MF_01322"/>
    </source>
</evidence>
<dbReference type="EC" id="2.7.7.6" evidence="1"/>
<dbReference type="EMBL" id="CP000259">
    <property type="protein sequence ID" value="ABF31273.1"/>
    <property type="molecule type" value="Genomic_DNA"/>
</dbReference>
<dbReference type="RefSeq" id="WP_011527438.1">
    <property type="nucleotide sequence ID" value="NC_008021.1"/>
</dbReference>
<dbReference type="SMR" id="Q1JNX6"/>
<dbReference type="GeneID" id="69900077"/>
<dbReference type="KEGG" id="spk:MGAS9429_Spy0085"/>
<dbReference type="HOGENOM" id="CLU_000524_3_1_9"/>
<dbReference type="Proteomes" id="UP000002433">
    <property type="component" value="Chromosome"/>
</dbReference>
<dbReference type="GO" id="GO:0000428">
    <property type="term" value="C:DNA-directed RNA polymerase complex"/>
    <property type="evidence" value="ECO:0007669"/>
    <property type="project" value="UniProtKB-KW"/>
</dbReference>
<dbReference type="GO" id="GO:0003677">
    <property type="term" value="F:DNA binding"/>
    <property type="evidence" value="ECO:0007669"/>
    <property type="project" value="UniProtKB-UniRule"/>
</dbReference>
<dbReference type="GO" id="GO:0003899">
    <property type="term" value="F:DNA-directed RNA polymerase activity"/>
    <property type="evidence" value="ECO:0007669"/>
    <property type="project" value="UniProtKB-UniRule"/>
</dbReference>
<dbReference type="GO" id="GO:0000287">
    <property type="term" value="F:magnesium ion binding"/>
    <property type="evidence" value="ECO:0007669"/>
    <property type="project" value="UniProtKB-UniRule"/>
</dbReference>
<dbReference type="GO" id="GO:0008270">
    <property type="term" value="F:zinc ion binding"/>
    <property type="evidence" value="ECO:0007669"/>
    <property type="project" value="UniProtKB-UniRule"/>
</dbReference>
<dbReference type="GO" id="GO:0006351">
    <property type="term" value="P:DNA-templated transcription"/>
    <property type="evidence" value="ECO:0007669"/>
    <property type="project" value="UniProtKB-UniRule"/>
</dbReference>
<dbReference type="CDD" id="cd02655">
    <property type="entry name" value="RNAP_beta'_C"/>
    <property type="match status" value="1"/>
</dbReference>
<dbReference type="CDD" id="cd01609">
    <property type="entry name" value="RNAP_beta'_N"/>
    <property type="match status" value="1"/>
</dbReference>
<dbReference type="FunFam" id="1.10.150.390:FF:000002">
    <property type="entry name" value="DNA-directed RNA polymerase subunit beta"/>
    <property type="match status" value="1"/>
</dbReference>
<dbReference type="FunFam" id="4.10.860.120:FF:000001">
    <property type="entry name" value="DNA-directed RNA polymerase subunit beta"/>
    <property type="match status" value="1"/>
</dbReference>
<dbReference type="Gene3D" id="1.10.132.30">
    <property type="match status" value="1"/>
</dbReference>
<dbReference type="Gene3D" id="1.10.150.390">
    <property type="match status" value="1"/>
</dbReference>
<dbReference type="Gene3D" id="1.10.1790.20">
    <property type="match status" value="1"/>
</dbReference>
<dbReference type="Gene3D" id="1.10.40.90">
    <property type="match status" value="1"/>
</dbReference>
<dbReference type="Gene3D" id="2.40.40.20">
    <property type="match status" value="1"/>
</dbReference>
<dbReference type="Gene3D" id="2.40.50.100">
    <property type="match status" value="1"/>
</dbReference>
<dbReference type="Gene3D" id="4.10.860.120">
    <property type="entry name" value="RNA polymerase II, clamp domain"/>
    <property type="match status" value="1"/>
</dbReference>
<dbReference type="Gene3D" id="1.10.274.100">
    <property type="entry name" value="RNA polymerase Rpb1, domain 3"/>
    <property type="match status" value="2"/>
</dbReference>
<dbReference type="HAMAP" id="MF_01322">
    <property type="entry name" value="RNApol_bact_RpoC"/>
    <property type="match status" value="1"/>
</dbReference>
<dbReference type="InterPro" id="IPR045867">
    <property type="entry name" value="DNA-dir_RpoC_beta_prime"/>
</dbReference>
<dbReference type="InterPro" id="IPR012754">
    <property type="entry name" value="DNA-dir_RpoC_beta_prime_bact"/>
</dbReference>
<dbReference type="InterPro" id="IPR000722">
    <property type="entry name" value="RNA_pol_asu"/>
</dbReference>
<dbReference type="InterPro" id="IPR006592">
    <property type="entry name" value="RNA_pol_N"/>
</dbReference>
<dbReference type="InterPro" id="IPR007080">
    <property type="entry name" value="RNA_pol_Rpb1_1"/>
</dbReference>
<dbReference type="InterPro" id="IPR007066">
    <property type="entry name" value="RNA_pol_Rpb1_3"/>
</dbReference>
<dbReference type="InterPro" id="IPR042102">
    <property type="entry name" value="RNA_pol_Rpb1_3_sf"/>
</dbReference>
<dbReference type="InterPro" id="IPR007083">
    <property type="entry name" value="RNA_pol_Rpb1_4"/>
</dbReference>
<dbReference type="InterPro" id="IPR007081">
    <property type="entry name" value="RNA_pol_Rpb1_5"/>
</dbReference>
<dbReference type="InterPro" id="IPR044893">
    <property type="entry name" value="RNA_pol_Rpb1_clamp_domain"/>
</dbReference>
<dbReference type="InterPro" id="IPR038120">
    <property type="entry name" value="Rpb1_funnel_sf"/>
</dbReference>
<dbReference type="NCBIfam" id="TIGR02386">
    <property type="entry name" value="rpoC_TIGR"/>
    <property type="match status" value="1"/>
</dbReference>
<dbReference type="PANTHER" id="PTHR19376">
    <property type="entry name" value="DNA-DIRECTED RNA POLYMERASE"/>
    <property type="match status" value="1"/>
</dbReference>
<dbReference type="PANTHER" id="PTHR19376:SF54">
    <property type="entry name" value="DNA-DIRECTED RNA POLYMERASE SUBUNIT BETA"/>
    <property type="match status" value="1"/>
</dbReference>
<dbReference type="Pfam" id="PF04997">
    <property type="entry name" value="RNA_pol_Rpb1_1"/>
    <property type="match status" value="1"/>
</dbReference>
<dbReference type="Pfam" id="PF00623">
    <property type="entry name" value="RNA_pol_Rpb1_2"/>
    <property type="match status" value="2"/>
</dbReference>
<dbReference type="Pfam" id="PF04983">
    <property type="entry name" value="RNA_pol_Rpb1_3"/>
    <property type="match status" value="1"/>
</dbReference>
<dbReference type="Pfam" id="PF05000">
    <property type="entry name" value="RNA_pol_Rpb1_4"/>
    <property type="match status" value="1"/>
</dbReference>
<dbReference type="Pfam" id="PF04998">
    <property type="entry name" value="RNA_pol_Rpb1_5"/>
    <property type="match status" value="1"/>
</dbReference>
<dbReference type="SMART" id="SM00663">
    <property type="entry name" value="RPOLA_N"/>
    <property type="match status" value="1"/>
</dbReference>
<dbReference type="SUPFAM" id="SSF64484">
    <property type="entry name" value="beta and beta-prime subunits of DNA dependent RNA-polymerase"/>
    <property type="match status" value="1"/>
</dbReference>
<reference key="1">
    <citation type="journal article" date="2006" name="Proc. Natl. Acad. Sci. U.S.A.">
        <title>Molecular genetic anatomy of inter- and intraserotype variation in the human bacterial pathogen group A Streptococcus.</title>
        <authorList>
            <person name="Beres S.B."/>
            <person name="Richter E.W."/>
            <person name="Nagiec M.J."/>
            <person name="Sumby P."/>
            <person name="Porcella S.F."/>
            <person name="DeLeo F.R."/>
            <person name="Musser J.M."/>
        </authorList>
    </citation>
    <scope>NUCLEOTIDE SEQUENCE [LARGE SCALE GENOMIC DNA]</scope>
    <source>
        <strain>MGAS9429</strain>
    </source>
</reference>
<sequence>MVDVNRFKSMQITLASPSKVRSWSYGEVKKPETINYRTLKPEREGLFDEVIFGPTKDWECACGKYKRIRYKGIVCDRCGVEVTRAKVRRERMGHIELKAPVSHIWYFKGIPSRMGLTLDMSPRALEEVIYFAAYVVIDPKDTPLEPKSLLTEREYREKLQEYGHGSFVAKMGAEAIQDLLKRVDLAAEIAELKEELKSASGQKRIKAVRRLDVLDAFNKSGNKPEWMVLNILPVIPPDLRPMVQLDGGRFAASDLNDLYRRVINRNNRLARLLELNAPGIIVQNEKRMLQEAVDALIDNGRRGRPITGPGSRPLKSLSHMLKGKQGRFRQNLLGKRVDFSGRSVIAVGPTLKMYQCGVPREMAIELFKPFVMREIVAKEYAGNVKAAKRMVERGDERIWDILEEVIKEHPVLLNRAPTLHRLGIQAFEPVLIDGKALRLHPLVCEAYNADFDGDQMAIHVPLSEEAQAEARLLMLAAEHILNPKDGKPVVTPSQDMVLGNYYLTMEDAGREGEGMIFKDKDEAVMAYRNGYAHLHSRVGIAVDSMPNKPWKDSQRHKIMVTTVGKILFNDIMPEDLPYLQEPNNANLTEGTPDKYFLEPGQDIQEVIDGLDINVPFKKKNLGNIIAETFKRFRTTETSAFLDRLKDLGYYHSTLAGLTVGIADIPVIDNKAEIIDAAHHRVEEINKAFRRGLMTDDDRYVAVTTTWREAKEALEKRLIETQDPKNPIVMMMDSGARGNISNFSQLAGMRGLMAAPNGRIMELPILSNFREGLSVLEMFFSTHGARKGMTDTALKTADSGYLTRRLVDVAQDVIIREDDCGTDRGLLIRAITDGKEVTETLEERLQGRYTRKSVKHPETGEVLIGADQLITEDMARKIVDAGVEEVTIRSVFTCATRHGVCRHCYGINLATGDAVEVGEAVGTIAAQSIGEPGTQLTMRTFHTGGVASNTDITQGLPRIQEIFEARNPKGEAVITEVKGNVVEIEEDASTRTKKVYVQGKTGMGEYVVPFTARMKVEVGDEVNRGAALTEGSIQPKRLLEVRDTLSVETYLLAEVQKVYRSQGVEIGDKHVEVMVRQMLRKVRVMDPGDTDLLPGTLMDISDFTDANKDIVISGGIPATSRPVLMGITKASLETNSFLSAASFQETTRVLTDAAIRGKKDHLLGLKENVIIGKIIPAGTGMARYRNIEPQAMNEIEVIDHTEVSAEAE</sequence>
<proteinExistence type="inferred from homology"/>
<gene>
    <name evidence="1" type="primary">rpoC</name>
    <name type="ordered locus">MGAS9429_Spy0085</name>
</gene>
<feature type="chain" id="PRO_0000308885" description="DNA-directed RNA polymerase subunit beta'">
    <location>
        <begin position="1"/>
        <end position="1207"/>
    </location>
</feature>
<feature type="binding site" evidence="1">
    <location>
        <position position="60"/>
    </location>
    <ligand>
        <name>Zn(2+)</name>
        <dbReference type="ChEBI" id="CHEBI:29105"/>
        <label>1</label>
    </ligand>
</feature>
<feature type="binding site" evidence="1">
    <location>
        <position position="62"/>
    </location>
    <ligand>
        <name>Zn(2+)</name>
        <dbReference type="ChEBI" id="CHEBI:29105"/>
        <label>1</label>
    </ligand>
</feature>
<feature type="binding site" evidence="1">
    <location>
        <position position="75"/>
    </location>
    <ligand>
        <name>Zn(2+)</name>
        <dbReference type="ChEBI" id="CHEBI:29105"/>
        <label>1</label>
    </ligand>
</feature>
<feature type="binding site" evidence="1">
    <location>
        <position position="78"/>
    </location>
    <ligand>
        <name>Zn(2+)</name>
        <dbReference type="ChEBI" id="CHEBI:29105"/>
        <label>1</label>
    </ligand>
</feature>
<feature type="binding site" evidence="1">
    <location>
        <position position="450"/>
    </location>
    <ligand>
        <name>Mg(2+)</name>
        <dbReference type="ChEBI" id="CHEBI:18420"/>
    </ligand>
</feature>
<feature type="binding site" evidence="1">
    <location>
        <position position="452"/>
    </location>
    <ligand>
        <name>Mg(2+)</name>
        <dbReference type="ChEBI" id="CHEBI:18420"/>
    </ligand>
</feature>
<feature type="binding site" evidence="1">
    <location>
        <position position="454"/>
    </location>
    <ligand>
        <name>Mg(2+)</name>
        <dbReference type="ChEBI" id="CHEBI:18420"/>
    </ligand>
</feature>
<feature type="binding site" evidence="1">
    <location>
        <position position="819"/>
    </location>
    <ligand>
        <name>Zn(2+)</name>
        <dbReference type="ChEBI" id="CHEBI:29105"/>
        <label>2</label>
    </ligand>
</feature>
<feature type="binding site" evidence="1">
    <location>
        <position position="893"/>
    </location>
    <ligand>
        <name>Zn(2+)</name>
        <dbReference type="ChEBI" id="CHEBI:29105"/>
        <label>2</label>
    </ligand>
</feature>
<feature type="binding site" evidence="1">
    <location>
        <position position="900"/>
    </location>
    <ligand>
        <name>Zn(2+)</name>
        <dbReference type="ChEBI" id="CHEBI:29105"/>
        <label>2</label>
    </ligand>
</feature>
<feature type="binding site" evidence="1">
    <location>
        <position position="903"/>
    </location>
    <ligand>
        <name>Zn(2+)</name>
        <dbReference type="ChEBI" id="CHEBI:29105"/>
        <label>2</label>
    </ligand>
</feature>
<keyword id="KW-0240">DNA-directed RNA polymerase</keyword>
<keyword id="KW-0460">Magnesium</keyword>
<keyword id="KW-0479">Metal-binding</keyword>
<keyword id="KW-0548">Nucleotidyltransferase</keyword>
<keyword id="KW-0804">Transcription</keyword>
<keyword id="KW-0808">Transferase</keyword>
<keyword id="KW-0862">Zinc</keyword>
<comment type="function">
    <text evidence="1">DNA-dependent RNA polymerase catalyzes the transcription of DNA into RNA using the four ribonucleoside triphosphates as substrates.</text>
</comment>
<comment type="catalytic activity">
    <reaction evidence="1">
        <text>RNA(n) + a ribonucleoside 5'-triphosphate = RNA(n+1) + diphosphate</text>
        <dbReference type="Rhea" id="RHEA:21248"/>
        <dbReference type="Rhea" id="RHEA-COMP:14527"/>
        <dbReference type="Rhea" id="RHEA-COMP:17342"/>
        <dbReference type="ChEBI" id="CHEBI:33019"/>
        <dbReference type="ChEBI" id="CHEBI:61557"/>
        <dbReference type="ChEBI" id="CHEBI:140395"/>
        <dbReference type="EC" id="2.7.7.6"/>
    </reaction>
</comment>
<comment type="cofactor">
    <cofactor evidence="1">
        <name>Mg(2+)</name>
        <dbReference type="ChEBI" id="CHEBI:18420"/>
    </cofactor>
    <text evidence="1">Binds 1 Mg(2+) ion per subunit.</text>
</comment>
<comment type="cofactor">
    <cofactor evidence="1">
        <name>Zn(2+)</name>
        <dbReference type="ChEBI" id="CHEBI:29105"/>
    </cofactor>
    <text evidence="1">Binds 2 Zn(2+) ions per subunit.</text>
</comment>
<comment type="subunit">
    <text evidence="1">The RNAP catalytic core consists of 2 alpha, 1 beta, 1 beta' and 1 omega subunit. When a sigma factor is associated with the core the holoenzyme is formed, which can initiate transcription.</text>
</comment>
<comment type="similarity">
    <text evidence="1">Belongs to the RNA polymerase beta' chain family.</text>
</comment>
<protein>
    <recommendedName>
        <fullName evidence="1">DNA-directed RNA polymerase subunit beta'</fullName>
        <shortName evidence="1">RNAP subunit beta'</shortName>
        <ecNumber evidence="1">2.7.7.6</ecNumber>
    </recommendedName>
    <alternativeName>
        <fullName evidence="1">RNA polymerase subunit beta'</fullName>
    </alternativeName>
    <alternativeName>
        <fullName evidence="1">Transcriptase subunit beta'</fullName>
    </alternativeName>
</protein>
<accession>Q1JNX6</accession>